<dbReference type="EC" id="4.1.2.40" evidence="1"/>
<dbReference type="EMBL" id="CU928160">
    <property type="protein sequence ID" value="CAQ99016.1"/>
    <property type="molecule type" value="Genomic_DNA"/>
</dbReference>
<dbReference type="RefSeq" id="WP_000289788.1">
    <property type="nucleotide sequence ID" value="NC_011741.1"/>
</dbReference>
<dbReference type="SMR" id="B7M477"/>
<dbReference type="KEGG" id="ecr:ECIAI1_2170"/>
<dbReference type="HOGENOM" id="CLU_040088_0_1_6"/>
<dbReference type="UniPathway" id="UPA00704">
    <property type="reaction ID" value="UER00716"/>
</dbReference>
<dbReference type="GO" id="GO:0005829">
    <property type="term" value="C:cytosol"/>
    <property type="evidence" value="ECO:0007669"/>
    <property type="project" value="TreeGrafter"/>
</dbReference>
<dbReference type="GO" id="GO:0009025">
    <property type="term" value="F:tagatose-bisphosphate aldolase activity"/>
    <property type="evidence" value="ECO:0007669"/>
    <property type="project" value="UniProtKB-UniRule"/>
</dbReference>
<dbReference type="GO" id="GO:0008270">
    <property type="term" value="F:zinc ion binding"/>
    <property type="evidence" value="ECO:0007669"/>
    <property type="project" value="UniProtKB-UniRule"/>
</dbReference>
<dbReference type="GO" id="GO:2001059">
    <property type="term" value="P:D-tagatose 6-phosphate catabolic process"/>
    <property type="evidence" value="ECO:0007669"/>
    <property type="project" value="UniProtKB-UniRule"/>
</dbReference>
<dbReference type="GO" id="GO:0019404">
    <property type="term" value="P:galactitol catabolic process"/>
    <property type="evidence" value="ECO:0007669"/>
    <property type="project" value="InterPro"/>
</dbReference>
<dbReference type="CDD" id="cd00947">
    <property type="entry name" value="TBP_aldolase_IIB"/>
    <property type="match status" value="1"/>
</dbReference>
<dbReference type="FunFam" id="3.20.20.70:FF:000043">
    <property type="entry name" value="D-tagatose-1,6-bisphosphate aldolase subunit GatY"/>
    <property type="match status" value="1"/>
</dbReference>
<dbReference type="Gene3D" id="3.20.20.70">
    <property type="entry name" value="Aldolase class I"/>
    <property type="match status" value="1"/>
</dbReference>
<dbReference type="HAMAP" id="MF_01294">
    <property type="entry name" value="TagBP_aldolase_GatY"/>
    <property type="match status" value="1"/>
</dbReference>
<dbReference type="InterPro" id="IPR013785">
    <property type="entry name" value="Aldolase_TIM"/>
</dbReference>
<dbReference type="InterPro" id="IPR050246">
    <property type="entry name" value="Class_II_FBP_aldolase"/>
</dbReference>
<dbReference type="InterPro" id="IPR000771">
    <property type="entry name" value="FBA_II"/>
</dbReference>
<dbReference type="InterPro" id="IPR011288">
    <property type="entry name" value="TagBP_ald_KbaY/GatY"/>
</dbReference>
<dbReference type="InterPro" id="IPR023955">
    <property type="entry name" value="TagBP_aldolase_GatY"/>
</dbReference>
<dbReference type="NCBIfam" id="TIGR00167">
    <property type="entry name" value="cbbA"/>
    <property type="match status" value="1"/>
</dbReference>
<dbReference type="NCBIfam" id="NF006626">
    <property type="entry name" value="PRK09195.1"/>
    <property type="match status" value="1"/>
</dbReference>
<dbReference type="NCBIfam" id="NF009374">
    <property type="entry name" value="PRK12737.1"/>
    <property type="match status" value="1"/>
</dbReference>
<dbReference type="NCBIfam" id="TIGR01858">
    <property type="entry name" value="tag_bisphos_ald"/>
    <property type="match status" value="1"/>
</dbReference>
<dbReference type="PANTHER" id="PTHR30304">
    <property type="entry name" value="D-TAGATOSE-1,6-BISPHOSPHATE ALDOLASE"/>
    <property type="match status" value="1"/>
</dbReference>
<dbReference type="PANTHER" id="PTHR30304:SF0">
    <property type="entry name" value="D-TAGATOSE-1,6-BISPHOSPHATE ALDOLASE SUBUNIT GATY-RELATED"/>
    <property type="match status" value="1"/>
</dbReference>
<dbReference type="Pfam" id="PF01116">
    <property type="entry name" value="F_bP_aldolase"/>
    <property type="match status" value="1"/>
</dbReference>
<dbReference type="PIRSF" id="PIRSF001359">
    <property type="entry name" value="F_bP_aldolase_II"/>
    <property type="match status" value="1"/>
</dbReference>
<dbReference type="SUPFAM" id="SSF51569">
    <property type="entry name" value="Aldolase"/>
    <property type="match status" value="1"/>
</dbReference>
<dbReference type="PROSITE" id="PS00602">
    <property type="entry name" value="ALDOLASE_CLASS_II_1"/>
    <property type="match status" value="1"/>
</dbReference>
<dbReference type="PROSITE" id="PS00806">
    <property type="entry name" value="ALDOLASE_CLASS_II_2"/>
    <property type="match status" value="1"/>
</dbReference>
<name>GATY_ECO8A</name>
<gene>
    <name evidence="1" type="primary">gatY</name>
    <name type="ordered locus">ECIAI1_2170</name>
</gene>
<protein>
    <recommendedName>
        <fullName evidence="1">D-tagatose-1,6-bisphosphate aldolase subunit GatY</fullName>
        <shortName evidence="1">TBPA</shortName>
        <shortName evidence="1">TagBP aldolase</shortName>
        <ecNumber evidence="1">4.1.2.40</ecNumber>
    </recommendedName>
    <alternativeName>
        <fullName evidence="1">D-tagatose-bisphosphate aldolase class II</fullName>
    </alternativeName>
    <alternativeName>
        <fullName evidence="1">Tagatose-bisphosphate aldolase</fullName>
    </alternativeName>
</protein>
<keyword id="KW-0298">Galactitol metabolism</keyword>
<keyword id="KW-0456">Lyase</keyword>
<keyword id="KW-0479">Metal-binding</keyword>
<keyword id="KW-0862">Zinc</keyword>
<sequence length="284" mass="30846">MYVVSTKQMLNNAQRGGYAVPAFNIHNLETMQVVVETAANLHAPVIIAGTPGTFTHAGTENLLALVSAMAKQYHHPLAIHLDHHTKFDDIAQKVRSGVRSVMIDASHLPFAQNISRVKEVVDFCHRFDVSVEAELGQLGGQEDDVQVNEADAFYTNPAQAREFAEATGIDSLAVAIGTAHGMYASAPALDFSRLENIRQWVNLPLVLHGASGLSTKDIQQTIKLGICKINVATELKNAFSQALKNYLTEHPEATDPRDYLQSAKSAMRDVVSKVIADCGCEGRA</sequence>
<reference key="1">
    <citation type="journal article" date="2009" name="PLoS Genet.">
        <title>Organised genome dynamics in the Escherichia coli species results in highly diverse adaptive paths.</title>
        <authorList>
            <person name="Touchon M."/>
            <person name="Hoede C."/>
            <person name="Tenaillon O."/>
            <person name="Barbe V."/>
            <person name="Baeriswyl S."/>
            <person name="Bidet P."/>
            <person name="Bingen E."/>
            <person name="Bonacorsi S."/>
            <person name="Bouchier C."/>
            <person name="Bouvet O."/>
            <person name="Calteau A."/>
            <person name="Chiapello H."/>
            <person name="Clermont O."/>
            <person name="Cruveiller S."/>
            <person name="Danchin A."/>
            <person name="Diard M."/>
            <person name="Dossat C."/>
            <person name="Karoui M.E."/>
            <person name="Frapy E."/>
            <person name="Garry L."/>
            <person name="Ghigo J.M."/>
            <person name="Gilles A.M."/>
            <person name="Johnson J."/>
            <person name="Le Bouguenec C."/>
            <person name="Lescat M."/>
            <person name="Mangenot S."/>
            <person name="Martinez-Jehanne V."/>
            <person name="Matic I."/>
            <person name="Nassif X."/>
            <person name="Oztas S."/>
            <person name="Petit M.A."/>
            <person name="Pichon C."/>
            <person name="Rouy Z."/>
            <person name="Ruf C.S."/>
            <person name="Schneider D."/>
            <person name="Tourret J."/>
            <person name="Vacherie B."/>
            <person name="Vallenet D."/>
            <person name="Medigue C."/>
            <person name="Rocha E.P.C."/>
            <person name="Denamur E."/>
        </authorList>
    </citation>
    <scope>NUCLEOTIDE SEQUENCE [LARGE SCALE GENOMIC DNA]</scope>
    <source>
        <strain>IAI1</strain>
    </source>
</reference>
<comment type="function">
    <text evidence="1">Catalytic subunit of the tagatose-1,6-bisphosphate aldolase GatYZ, which catalyzes the reversible aldol condensation of dihydroxyacetone phosphate (DHAP or glycerone-phosphate) with glyceraldehyde 3-phosphate (G3P) to produce tagatose 1,6-bisphosphate (TBP). Requires GatZ subunit for full activity and stability. Is involved in the catabolism of galactitol.</text>
</comment>
<comment type="catalytic activity">
    <reaction evidence="1">
        <text>D-tagatofuranose 1,6-bisphosphate = D-glyceraldehyde 3-phosphate + dihydroxyacetone phosphate</text>
        <dbReference type="Rhea" id="RHEA:22948"/>
        <dbReference type="ChEBI" id="CHEBI:57642"/>
        <dbReference type="ChEBI" id="CHEBI:58694"/>
        <dbReference type="ChEBI" id="CHEBI:59776"/>
        <dbReference type="EC" id="4.1.2.40"/>
    </reaction>
</comment>
<comment type="cofactor">
    <cofactor evidence="1">
        <name>Zn(2+)</name>
        <dbReference type="ChEBI" id="CHEBI:29105"/>
    </cofactor>
    <text evidence="1">Binds 1 zinc ion per subunit.</text>
</comment>
<comment type="pathway">
    <text evidence="1">Carbohydrate metabolism; D-tagatose 6-phosphate degradation; D-glyceraldehyde 3-phosphate and glycerone phosphate from D-tagatose 6-phosphate: step 2/2.</text>
</comment>
<comment type="subunit">
    <text evidence="1">Forms a complex with GatZ.</text>
</comment>
<comment type="similarity">
    <text evidence="1">Belongs to the class II fructose-bisphosphate aldolase family. TagBP aldolase GatY subfamily.</text>
</comment>
<feature type="chain" id="PRO_1000140438" description="D-tagatose-1,6-bisphosphate aldolase subunit GatY">
    <location>
        <begin position="1"/>
        <end position="284"/>
    </location>
</feature>
<feature type="active site" description="Proton donor" evidence="1">
    <location>
        <position position="82"/>
    </location>
</feature>
<feature type="binding site" evidence="1">
    <location>
        <position position="83"/>
    </location>
    <ligand>
        <name>Zn(2+)</name>
        <dbReference type="ChEBI" id="CHEBI:29105"/>
        <note>catalytic</note>
    </ligand>
</feature>
<feature type="binding site" evidence="1">
    <location>
        <position position="180"/>
    </location>
    <ligand>
        <name>Zn(2+)</name>
        <dbReference type="ChEBI" id="CHEBI:29105"/>
        <note>catalytic</note>
    </ligand>
</feature>
<feature type="binding site" evidence="1">
    <location>
        <position position="181"/>
    </location>
    <ligand>
        <name>dihydroxyacetone phosphate</name>
        <dbReference type="ChEBI" id="CHEBI:57642"/>
    </ligand>
</feature>
<feature type="binding site" evidence="1">
    <location>
        <position position="208"/>
    </location>
    <ligand>
        <name>Zn(2+)</name>
        <dbReference type="ChEBI" id="CHEBI:29105"/>
        <note>catalytic</note>
    </ligand>
</feature>
<feature type="binding site" evidence="1">
    <location>
        <begin position="209"/>
        <end position="211"/>
    </location>
    <ligand>
        <name>dihydroxyacetone phosphate</name>
        <dbReference type="ChEBI" id="CHEBI:57642"/>
    </ligand>
</feature>
<feature type="binding site" evidence="1">
    <location>
        <begin position="230"/>
        <end position="233"/>
    </location>
    <ligand>
        <name>dihydroxyacetone phosphate</name>
        <dbReference type="ChEBI" id="CHEBI:57642"/>
    </ligand>
</feature>
<proteinExistence type="inferred from homology"/>
<evidence type="ECO:0000255" key="1">
    <source>
        <dbReference type="HAMAP-Rule" id="MF_01294"/>
    </source>
</evidence>
<organism>
    <name type="scientific">Escherichia coli O8 (strain IAI1)</name>
    <dbReference type="NCBI Taxonomy" id="585034"/>
    <lineage>
        <taxon>Bacteria</taxon>
        <taxon>Pseudomonadati</taxon>
        <taxon>Pseudomonadota</taxon>
        <taxon>Gammaproteobacteria</taxon>
        <taxon>Enterobacterales</taxon>
        <taxon>Enterobacteriaceae</taxon>
        <taxon>Escherichia</taxon>
    </lineage>
</organism>
<accession>B7M477</accession>